<proteinExistence type="evidence at protein level"/>
<gene>
    <name evidence="7" type="primary">cyp52M1</name>
</gene>
<name>CP52M_STABO</name>
<sequence>MLIKDIILTPMSLSAVAGLLPLLFVAFLVLHEPIWLLWYRYAARRHKCSMPRFIEKSFPLGIQRTMDMIKTAKSYTLLEVQYDRVFNKFKARTYLRQAPLQYQIFTIEPENIKTILATKFNDFGLGARFHTVGKVFGQGIFTLSGNGWKQSRSMLRPQFTKDQVCRIDQISSHAAELIKEMNRAMKVDQFIDVQHYFHKLTLDTATEFLFGESCESLNPENQSCIVARDGSEITAEQFVESYNFLLNYAFKRTLSSKVYWLFNSKEFRDHKKRAQSYIDYYVDKALYATSFAAENSIAEKDAAAESSGIYVFSLEMAKVTRDPVTIRDQIFNILIAGRDTTAATLSFAIHFLARNPDVFNKLREEVLDHFGTKEEQRPLSFELLKQAPYLKQVINEVLRLAPVLPLNFRTAVRDTTLPIGGGPEQKDPIFVPKGTAVYYSIYMVHRDIKYWGPDAHEFNPNRWENLKLDNVWAFLPFNGGPRICLGQQFALTELSLTLVRLLQEYSKIEMGPDFPESPRFSTTLTAQHAPPGVVVRFS</sequence>
<organism>
    <name type="scientific">Starmerella bombicola</name>
    <name type="common">Yeast</name>
    <name type="synonym">Candida bombicola</name>
    <dbReference type="NCBI Taxonomy" id="75736"/>
    <lineage>
        <taxon>Eukaryota</taxon>
        <taxon>Fungi</taxon>
        <taxon>Dikarya</taxon>
        <taxon>Ascomycota</taxon>
        <taxon>Saccharomycotina</taxon>
        <taxon>Dipodascomycetes</taxon>
        <taxon>Dipodascales</taxon>
        <taxon>Trichomonascaceae</taxon>
        <taxon>Starmerella</taxon>
    </lineage>
</organism>
<evidence type="ECO:0000250" key="1">
    <source>
        <dbReference type="UniProtKB" id="P04798"/>
    </source>
</evidence>
<evidence type="ECO:0000255" key="2"/>
<evidence type="ECO:0000269" key="3">
    <source>
    </source>
</evidence>
<evidence type="ECO:0000269" key="4">
    <source>
    </source>
</evidence>
<evidence type="ECO:0000269" key="5">
    <source>
    </source>
</evidence>
<evidence type="ECO:0000269" key="6">
    <source>
    </source>
</evidence>
<evidence type="ECO:0000303" key="7">
    <source>
    </source>
</evidence>
<evidence type="ECO:0000305" key="8"/>
<protein>
    <recommendedName>
        <fullName evidence="8">Cytochrome P450 52-M1</fullName>
        <shortName>CYP52-M1</shortName>
        <ecNumber evidence="4 6">1.14.14.80</ecNumber>
    </recommendedName>
    <alternativeName>
        <fullName evidence="7">Cytochrome P450 monooxygenase CYP52-M1</fullName>
    </alternativeName>
</protein>
<reference key="1">
    <citation type="journal article" date="2009" name="FEMS Yeast Res.">
        <title>Importance of the cytochrome P450 monooxygenase CYP52 family for the sophorolipid-producing yeast Candida bombicola.</title>
        <authorList>
            <person name="van Bogaert I.N."/>
            <person name="Demey M."/>
            <person name="Develter D."/>
            <person name="Soetaert W."/>
            <person name="Vandamme E.J."/>
        </authorList>
    </citation>
    <scope>NUCLEOTIDE SEQUENCE [GENOMIC DNA]</scope>
    <scope>INDUCTION</scope>
    <source>
        <strain>ATCC 22214 / CBS 6009 / JCM 9596 / NBRC 10243 / NRRL Y-17069</strain>
    </source>
</reference>
<reference key="2">
    <citation type="journal article" date="2013" name="J. Proteome Res.">
        <title>SILAC-based proteome analysis of Starmerella bombicola sophorolipid production.</title>
        <authorList>
            <person name="Ciesielska K."/>
            <person name="Li B."/>
            <person name="Groeneboer S."/>
            <person name="Van Bogaert I."/>
            <person name="Lin Y.C."/>
            <person name="Soetaert W."/>
            <person name="Van de Peer Y."/>
            <person name="Devreese B."/>
        </authorList>
    </citation>
    <scope>IDENTIFICATION BY MASS SPECTROMETRY</scope>
    <scope>INDUCTION</scope>
    <source>
        <strain>ATCC 22214 / CBS 6009 / JCM 9596 / NBRC 10243 / NRRL Y-17069</strain>
    </source>
</reference>
<reference key="3">
    <citation type="journal article" date="2013" name="Mol. Microbiol.">
        <title>The biosynthetic gene cluster for sophorolipids: a biotechnological interesting biosurfactant produced by Starmerella bombicola.</title>
        <authorList>
            <person name="Van Bogaert I.N."/>
            <person name="Holvoet K."/>
            <person name="Roelants S.L."/>
            <person name="Li B."/>
            <person name="Lin Y.C."/>
            <person name="Van de Peer Y."/>
            <person name="Soetaert W."/>
        </authorList>
    </citation>
    <scope>FUNCTION</scope>
</reference>
<reference key="4">
    <citation type="journal article" date="2014" name="Appl. Environ. Microbiol.">
        <title>Expression and characterization of CYP52 genes involved in the biosynthesis of sophorolipid and alkane metabolism from Starmerella bombicola.</title>
        <authorList>
            <person name="Huang F.C."/>
            <person name="Peter A."/>
            <person name="Schwab W."/>
        </authorList>
    </citation>
    <scope>FUNCTION</scope>
    <scope>CATALYTIC ACTIVITY</scope>
    <scope>BIOPHYSICOCHEMICAL PROPERTIES</scope>
    <scope>SUBSTRATE SPECIFICITY</scope>
</reference>
<keyword id="KW-0349">Heme</keyword>
<keyword id="KW-0408">Iron</keyword>
<keyword id="KW-0472">Membrane</keyword>
<keyword id="KW-0479">Metal-binding</keyword>
<keyword id="KW-0503">Monooxygenase</keyword>
<keyword id="KW-0560">Oxidoreductase</keyword>
<keyword id="KW-0812">Transmembrane</keyword>
<keyword id="KW-1133">Transmembrane helix</keyword>
<feature type="chain" id="PRO_0000443096" description="Cytochrome P450 52-M1">
    <location>
        <begin position="1"/>
        <end position="538"/>
    </location>
</feature>
<feature type="transmembrane region" description="Helical" evidence="2">
    <location>
        <begin position="18"/>
        <end position="38"/>
    </location>
</feature>
<feature type="binding site" description="axial binding residue" evidence="1">
    <location>
        <position position="484"/>
    </location>
    <ligand>
        <name>heme</name>
        <dbReference type="ChEBI" id="CHEBI:30413"/>
    </ligand>
    <ligandPart>
        <name>Fe</name>
        <dbReference type="ChEBI" id="CHEBI:18248"/>
    </ligandPart>
</feature>
<comment type="function">
    <text evidence="4 6">Catalyzes the first step of sophorolipid biosynthesis. Catalyzes the terminal (at the omega-position) or subterminal (at the omega(-1)-position) hydroxylation of a fatty acid. This converts the fatty acid to a substrate for the subsequent glycosyltransferase reactions (PubMed:23516968, PubMed:24242247). Oleic acid is the preferred substrate, but it acts on various other C-16, C-18 and C-20 saturated and unsaturated fatty acids, namely palmitic, palmitoleic, stearic, linoleic, cis-9,10-epoxystearic, trans-9,10-epoxystearic and arachidonic acid (PubMed:24242247).</text>
</comment>
<comment type="catalytic activity">
    <reaction evidence="4 6">
        <text>an omega-methyl-long-chain fatty acid + reduced [NADPH--hemoprotein reductase] + O2 = an omega-hydroxy-long-chain fatty acid + oxidized [NADPH--hemoprotein reductase] + H2O + H(+)</text>
        <dbReference type="Rhea" id="RHEA:56748"/>
        <dbReference type="Rhea" id="RHEA-COMP:11964"/>
        <dbReference type="Rhea" id="RHEA-COMP:11965"/>
        <dbReference type="ChEBI" id="CHEBI:15377"/>
        <dbReference type="ChEBI" id="CHEBI:15378"/>
        <dbReference type="ChEBI" id="CHEBI:15379"/>
        <dbReference type="ChEBI" id="CHEBI:57618"/>
        <dbReference type="ChEBI" id="CHEBI:58210"/>
        <dbReference type="ChEBI" id="CHEBI:140991"/>
        <dbReference type="ChEBI" id="CHEBI:140992"/>
        <dbReference type="EC" id="1.14.14.80"/>
    </reaction>
</comment>
<comment type="catalytic activity">
    <reaction evidence="4 6">
        <text>an (omega-1)-ethyl fatty acid + reduced [NADPH--hemoprotein reductase] + O2 = an (omega-1)-hydroxy-long-chain fatty acid + oxidized [NADPH--hemoprotein reductase] + H2O + H(+)</text>
        <dbReference type="Rhea" id="RHEA:60936"/>
        <dbReference type="Rhea" id="RHEA-COMP:11964"/>
        <dbReference type="Rhea" id="RHEA-COMP:11965"/>
        <dbReference type="ChEBI" id="CHEBI:15377"/>
        <dbReference type="ChEBI" id="CHEBI:15378"/>
        <dbReference type="ChEBI" id="CHEBI:15379"/>
        <dbReference type="ChEBI" id="CHEBI:57618"/>
        <dbReference type="ChEBI" id="CHEBI:58210"/>
        <dbReference type="ChEBI" id="CHEBI:84493"/>
        <dbReference type="ChEBI" id="CHEBI:144045"/>
    </reaction>
</comment>
<comment type="catalytic activity">
    <reaction evidence="6">
        <text>(9Z)-octadecenoate + reduced [NADPH--hemoprotein reductase] + O2 = 18-hydroxy-(9Z)-octadecenoate + oxidized [NADPH--hemoprotein reductase] + H2O + H(+)</text>
        <dbReference type="Rhea" id="RHEA:41728"/>
        <dbReference type="Rhea" id="RHEA-COMP:11964"/>
        <dbReference type="Rhea" id="RHEA-COMP:11965"/>
        <dbReference type="ChEBI" id="CHEBI:15377"/>
        <dbReference type="ChEBI" id="CHEBI:15378"/>
        <dbReference type="ChEBI" id="CHEBI:15379"/>
        <dbReference type="ChEBI" id="CHEBI:30823"/>
        <dbReference type="ChEBI" id="CHEBI:57618"/>
        <dbReference type="ChEBI" id="CHEBI:58210"/>
        <dbReference type="ChEBI" id="CHEBI:78424"/>
        <dbReference type="EC" id="1.14.14.80"/>
    </reaction>
</comment>
<comment type="catalytic activity">
    <reaction evidence="6">
        <text>(9Z)-octadecenoate + reduced [NADPH--hemoprotein reductase] + O2 = 17-hydroxy-(9Z)-octadecenoate + oxidized [NADPH--hemoprotein reductase] + H2O + H(+)</text>
        <dbReference type="Rhea" id="RHEA:60928"/>
        <dbReference type="Rhea" id="RHEA-COMP:11964"/>
        <dbReference type="Rhea" id="RHEA-COMP:11965"/>
        <dbReference type="ChEBI" id="CHEBI:15377"/>
        <dbReference type="ChEBI" id="CHEBI:15378"/>
        <dbReference type="ChEBI" id="CHEBI:15379"/>
        <dbReference type="ChEBI" id="CHEBI:30823"/>
        <dbReference type="ChEBI" id="CHEBI:57618"/>
        <dbReference type="ChEBI" id="CHEBI:58210"/>
        <dbReference type="ChEBI" id="CHEBI:144040"/>
    </reaction>
</comment>
<comment type="catalytic activity">
    <reaction evidence="6">
        <text>(9Z,12Z)-octadecadienoate + reduced [NADPH--hemoprotein reductase] + O2 = 18-hydroxy-(9Z,12Z)-octadecadienoate + oxidized [NADPH--hemoprotein reductase] + H2O + H(+)</text>
        <dbReference type="Rhea" id="RHEA:60580"/>
        <dbReference type="Rhea" id="RHEA-COMP:11964"/>
        <dbReference type="Rhea" id="RHEA-COMP:11965"/>
        <dbReference type="ChEBI" id="CHEBI:15377"/>
        <dbReference type="ChEBI" id="CHEBI:15378"/>
        <dbReference type="ChEBI" id="CHEBI:15379"/>
        <dbReference type="ChEBI" id="CHEBI:30245"/>
        <dbReference type="ChEBI" id="CHEBI:57618"/>
        <dbReference type="ChEBI" id="CHEBI:58210"/>
        <dbReference type="ChEBI" id="CHEBI:132029"/>
    </reaction>
</comment>
<comment type="catalytic activity">
    <reaction evidence="6">
        <text>(9Z,12Z)-octadecadienoate + reduced [NADPH--hemoprotein reductase] + O2 = 17-hydroxy-(9Z,12Z)-octadecadienoate + oxidized [NADPH--hemoprotein reductase] + H2O + H(+)</text>
        <dbReference type="Rhea" id="RHEA:60932"/>
        <dbReference type="Rhea" id="RHEA-COMP:11964"/>
        <dbReference type="Rhea" id="RHEA-COMP:11965"/>
        <dbReference type="ChEBI" id="CHEBI:15377"/>
        <dbReference type="ChEBI" id="CHEBI:15378"/>
        <dbReference type="ChEBI" id="CHEBI:15379"/>
        <dbReference type="ChEBI" id="CHEBI:30245"/>
        <dbReference type="ChEBI" id="CHEBI:57618"/>
        <dbReference type="ChEBI" id="CHEBI:58210"/>
        <dbReference type="ChEBI" id="CHEBI:144041"/>
    </reaction>
</comment>
<comment type="catalytic activity">
    <reaction evidence="6">
        <text>hexadecanoate + reduced [NADPH--hemoprotein reductase] + O2 = 16-hydroxyhexadecanoate + oxidized [NADPH--hemoprotein reductase] + H2O + H(+)</text>
        <dbReference type="Rhea" id="RHEA:40199"/>
        <dbReference type="Rhea" id="RHEA-COMP:11964"/>
        <dbReference type="Rhea" id="RHEA-COMP:11965"/>
        <dbReference type="ChEBI" id="CHEBI:7896"/>
        <dbReference type="ChEBI" id="CHEBI:15377"/>
        <dbReference type="ChEBI" id="CHEBI:15378"/>
        <dbReference type="ChEBI" id="CHEBI:15379"/>
        <dbReference type="ChEBI" id="CHEBI:55329"/>
        <dbReference type="ChEBI" id="CHEBI:57618"/>
        <dbReference type="ChEBI" id="CHEBI:58210"/>
        <dbReference type="EC" id="1.14.14.80"/>
    </reaction>
</comment>
<comment type="catalytic activity">
    <reaction evidence="6">
        <text>(9Z)-hexadecenoate + reduced [NADPH--hemoprotein reductase] + O2 = (9Z)-16-hydroxyhexadec-9-enoate + oxidized [NADPH--hemoprotein reductase] + H2O + H(+)</text>
        <dbReference type="Rhea" id="RHEA:60940"/>
        <dbReference type="Rhea" id="RHEA-COMP:11964"/>
        <dbReference type="Rhea" id="RHEA-COMP:11965"/>
        <dbReference type="ChEBI" id="CHEBI:15377"/>
        <dbReference type="ChEBI" id="CHEBI:15378"/>
        <dbReference type="ChEBI" id="CHEBI:15379"/>
        <dbReference type="ChEBI" id="CHEBI:32372"/>
        <dbReference type="ChEBI" id="CHEBI:57618"/>
        <dbReference type="ChEBI" id="CHEBI:58210"/>
        <dbReference type="ChEBI" id="CHEBI:144048"/>
    </reaction>
</comment>
<comment type="catalytic activity">
    <reaction evidence="6">
        <text>octadecanoate + reduced [NADPH--hemoprotein reductase] + O2 = 18-hydroxyoctadecanoate + oxidized [NADPH--hemoprotein reductase] + H2O + H(+)</text>
        <dbReference type="Rhea" id="RHEA:46356"/>
        <dbReference type="Rhea" id="RHEA-COMP:11964"/>
        <dbReference type="Rhea" id="RHEA-COMP:11965"/>
        <dbReference type="ChEBI" id="CHEBI:15377"/>
        <dbReference type="ChEBI" id="CHEBI:15378"/>
        <dbReference type="ChEBI" id="CHEBI:15379"/>
        <dbReference type="ChEBI" id="CHEBI:25629"/>
        <dbReference type="ChEBI" id="CHEBI:57618"/>
        <dbReference type="ChEBI" id="CHEBI:58210"/>
        <dbReference type="ChEBI" id="CHEBI:86046"/>
        <dbReference type="EC" id="1.14.14.80"/>
    </reaction>
</comment>
<comment type="cofactor">
    <cofactor evidence="1">
        <name>heme</name>
        <dbReference type="ChEBI" id="CHEBI:30413"/>
    </cofactor>
</comment>
<comment type="biophysicochemical properties">
    <kinetics>
        <KM evidence="6">40 uM for oleic acid</KM>
        <KM evidence="6">68 uM for linoleic acid</KM>
        <KM evidence="6">54 uM for arachidonic acid</KM>
        <Vmax evidence="6">535.0 pmol/min/mg enzyme for oleic acid</Vmax>
        <Vmax evidence="6">451.0 pmol/min/mg enzyme for linoleic acid</Vmax>
        <Vmax evidence="6">306.0 pmol/min/mg enzyme for arachidonic acid</Vmax>
    </kinetics>
    <phDependence>
        <text evidence="6">Optimum pH is 7.</text>
    </phDependence>
    <temperatureDependence>
        <text evidence="6">Optimum temperature is 25-30 degrees Celsius.</text>
    </temperatureDependence>
</comment>
<comment type="subcellular location">
    <subcellularLocation>
        <location evidence="2">Membrane</location>
        <topology evidence="2">Single-pass membrane protein</topology>
    </subcellularLocation>
</comment>
<comment type="induction">
    <text evidence="3 5">Only expressed in stationary phase.</text>
</comment>
<comment type="similarity">
    <text evidence="8">Belongs to the cytochrome P450 family.</text>
</comment>
<dbReference type="EC" id="1.14.14.80" evidence="4 6"/>
<dbReference type="EMBL" id="EU552419">
    <property type="protein sequence ID" value="ACD75398.1"/>
    <property type="molecule type" value="Genomic_DNA"/>
</dbReference>
<dbReference type="SMR" id="B8QHP1"/>
<dbReference type="KEGG" id="ag:ACD75398"/>
<dbReference type="BioCyc" id="MetaCyc:MONOMER-18770"/>
<dbReference type="BRENDA" id="1.14.14.80">
    <property type="organism ID" value="1101"/>
</dbReference>
<dbReference type="SABIO-RK" id="B8QHP1"/>
<dbReference type="GO" id="GO:0016020">
    <property type="term" value="C:membrane"/>
    <property type="evidence" value="ECO:0007669"/>
    <property type="project" value="UniProtKB-SubCell"/>
</dbReference>
<dbReference type="GO" id="GO:0020037">
    <property type="term" value="F:heme binding"/>
    <property type="evidence" value="ECO:0007669"/>
    <property type="project" value="InterPro"/>
</dbReference>
<dbReference type="GO" id="GO:0005506">
    <property type="term" value="F:iron ion binding"/>
    <property type="evidence" value="ECO:0007669"/>
    <property type="project" value="InterPro"/>
</dbReference>
<dbReference type="GO" id="GO:0120319">
    <property type="term" value="F:long-chain fatty acid omega-1 hydroxylase activity"/>
    <property type="evidence" value="ECO:0007669"/>
    <property type="project" value="RHEA"/>
</dbReference>
<dbReference type="GO" id="GO:0102033">
    <property type="term" value="F:long-chain fatty acid omega-hydroxylase activity"/>
    <property type="evidence" value="ECO:0007669"/>
    <property type="project" value="UniProtKB-EC"/>
</dbReference>
<dbReference type="CDD" id="cd11063">
    <property type="entry name" value="CYP52"/>
    <property type="match status" value="1"/>
</dbReference>
<dbReference type="Gene3D" id="1.10.630.10">
    <property type="entry name" value="Cytochrome P450"/>
    <property type="match status" value="1"/>
</dbReference>
<dbReference type="InterPro" id="IPR001128">
    <property type="entry name" value="Cyt_P450"/>
</dbReference>
<dbReference type="InterPro" id="IPR017972">
    <property type="entry name" value="Cyt_P450_CS"/>
</dbReference>
<dbReference type="InterPro" id="IPR002974">
    <property type="entry name" value="Cyt_P450_E_CYP52_ascomycetes"/>
</dbReference>
<dbReference type="InterPro" id="IPR047146">
    <property type="entry name" value="Cyt_P450_E_CYP52_fungi"/>
</dbReference>
<dbReference type="InterPro" id="IPR002402">
    <property type="entry name" value="Cyt_P450_E_grp-II"/>
</dbReference>
<dbReference type="InterPro" id="IPR036396">
    <property type="entry name" value="Cyt_P450_sf"/>
</dbReference>
<dbReference type="PANTHER" id="PTHR24287">
    <property type="entry name" value="P450, PUTATIVE (EUROFUNG)-RELATED"/>
    <property type="match status" value="1"/>
</dbReference>
<dbReference type="PANTHER" id="PTHR24287:SF1">
    <property type="entry name" value="P450, PUTATIVE (EUROFUNG)-RELATED"/>
    <property type="match status" value="1"/>
</dbReference>
<dbReference type="Pfam" id="PF00067">
    <property type="entry name" value="p450"/>
    <property type="match status" value="1"/>
</dbReference>
<dbReference type="PRINTS" id="PR00464">
    <property type="entry name" value="EP450II"/>
</dbReference>
<dbReference type="PRINTS" id="PR01239">
    <property type="entry name" value="EP450IICYP52"/>
</dbReference>
<dbReference type="PRINTS" id="PR00385">
    <property type="entry name" value="P450"/>
</dbReference>
<dbReference type="SUPFAM" id="SSF48264">
    <property type="entry name" value="Cytochrome P450"/>
    <property type="match status" value="1"/>
</dbReference>
<dbReference type="PROSITE" id="PS00086">
    <property type="entry name" value="CYTOCHROME_P450"/>
    <property type="match status" value="1"/>
</dbReference>
<accession>B8QHP1</accession>